<dbReference type="EMBL" id="BC003426">
    <property type="protein sequence ID" value="AAH03426.1"/>
    <property type="molecule type" value="mRNA"/>
</dbReference>
<dbReference type="CCDS" id="CCDS39282.1"/>
<dbReference type="RefSeq" id="NP_663346.1">
    <property type="nucleotide sequence ID" value="NM_145371.4"/>
</dbReference>
<dbReference type="SMR" id="Q99LC8"/>
<dbReference type="BioGRID" id="229070">
    <property type="interactions" value="5"/>
</dbReference>
<dbReference type="FunCoup" id="Q99LC8">
    <property type="interactions" value="4234"/>
</dbReference>
<dbReference type="IntAct" id="Q99LC8">
    <property type="interactions" value="1"/>
</dbReference>
<dbReference type="STRING" id="10090.ENSMUSP00000031334"/>
<dbReference type="GlyGen" id="Q99LC8">
    <property type="glycosylation" value="1 site, 1 N-linked glycan (1 site)"/>
</dbReference>
<dbReference type="iPTMnet" id="Q99LC8"/>
<dbReference type="PhosphoSitePlus" id="Q99LC8"/>
<dbReference type="SwissPalm" id="Q99LC8"/>
<dbReference type="jPOST" id="Q99LC8"/>
<dbReference type="PaxDb" id="10090-ENSMUSP00000031334"/>
<dbReference type="ProteomicsDB" id="277576"/>
<dbReference type="Pumba" id="Q99LC8"/>
<dbReference type="Antibodypedia" id="31819">
    <property type="antibodies" value="154 antibodies from 27 providers"/>
</dbReference>
<dbReference type="Ensembl" id="ENSMUST00000031334.15">
    <property type="protein sequence ID" value="ENSMUSP00000031334.9"/>
    <property type="gene ID" value="ENSMUSG00000029388.15"/>
</dbReference>
<dbReference type="GeneID" id="209354"/>
<dbReference type="KEGG" id="mmu:209354"/>
<dbReference type="UCSC" id="uc008zqd.1">
    <property type="organism name" value="mouse"/>
</dbReference>
<dbReference type="AGR" id="MGI:2384802"/>
<dbReference type="CTD" id="1967"/>
<dbReference type="MGI" id="MGI:2384802">
    <property type="gene designation" value="Eif2b1"/>
</dbReference>
<dbReference type="VEuPathDB" id="HostDB:ENSMUSG00000029388"/>
<dbReference type="eggNOG" id="KOG1466">
    <property type="taxonomic scope" value="Eukaryota"/>
</dbReference>
<dbReference type="GeneTree" id="ENSGT00550000074853"/>
<dbReference type="HOGENOM" id="CLU_016218_0_2_1"/>
<dbReference type="InParanoid" id="Q99LC8"/>
<dbReference type="OMA" id="GDWESCK"/>
<dbReference type="OrthoDB" id="10249309at2759"/>
<dbReference type="PhylomeDB" id="Q99LC8"/>
<dbReference type="TreeFam" id="TF101505"/>
<dbReference type="Reactome" id="R-MMU-72731">
    <property type="pathway name" value="Recycling of eIF2:GDP"/>
</dbReference>
<dbReference type="BioGRID-ORCS" id="209354">
    <property type="hits" value="25 hits in 77 CRISPR screens"/>
</dbReference>
<dbReference type="ChiTaRS" id="Eif2b1">
    <property type="organism name" value="mouse"/>
</dbReference>
<dbReference type="PRO" id="PR:Q99LC8"/>
<dbReference type="Proteomes" id="UP000000589">
    <property type="component" value="Chromosome 5"/>
</dbReference>
<dbReference type="RNAct" id="Q99LC8">
    <property type="molecule type" value="protein"/>
</dbReference>
<dbReference type="Bgee" id="ENSMUSG00000029388">
    <property type="expression patterns" value="Expressed in animal zygote and 286 other cell types or tissues"/>
</dbReference>
<dbReference type="ExpressionAtlas" id="Q99LC8">
    <property type="expression patterns" value="baseline and differential"/>
</dbReference>
<dbReference type="GO" id="GO:0005737">
    <property type="term" value="C:cytoplasm"/>
    <property type="evidence" value="ECO:0000250"/>
    <property type="project" value="UniProtKB"/>
</dbReference>
<dbReference type="GO" id="GO:0005829">
    <property type="term" value="C:cytosol"/>
    <property type="evidence" value="ECO:0007669"/>
    <property type="project" value="UniProtKB-SubCell"/>
</dbReference>
<dbReference type="GO" id="GO:0005851">
    <property type="term" value="C:eukaryotic translation initiation factor 2B complex"/>
    <property type="evidence" value="ECO:0000250"/>
    <property type="project" value="UniProtKB"/>
</dbReference>
<dbReference type="GO" id="GO:0016020">
    <property type="term" value="C:membrane"/>
    <property type="evidence" value="ECO:0000266"/>
    <property type="project" value="MGI"/>
</dbReference>
<dbReference type="GO" id="GO:0005886">
    <property type="term" value="C:plasma membrane"/>
    <property type="evidence" value="ECO:0000266"/>
    <property type="project" value="MGI"/>
</dbReference>
<dbReference type="GO" id="GO:0005085">
    <property type="term" value="F:guanyl-nucleotide exchange factor activity"/>
    <property type="evidence" value="ECO:0000250"/>
    <property type="project" value="UniProtKB"/>
</dbReference>
<dbReference type="GO" id="GO:0042802">
    <property type="term" value="F:identical protein binding"/>
    <property type="evidence" value="ECO:0007669"/>
    <property type="project" value="Ensembl"/>
</dbReference>
<dbReference type="GO" id="GO:0003743">
    <property type="term" value="F:translation initiation factor activity"/>
    <property type="evidence" value="ECO:0007669"/>
    <property type="project" value="UniProtKB-KW"/>
</dbReference>
<dbReference type="GO" id="GO:0002183">
    <property type="term" value="P:cytoplasmic translational initiation"/>
    <property type="evidence" value="ECO:0000250"/>
    <property type="project" value="UniProtKB"/>
</dbReference>
<dbReference type="GO" id="GO:0014003">
    <property type="term" value="P:oligodendrocyte development"/>
    <property type="evidence" value="ECO:0000250"/>
    <property type="project" value="UniProtKB"/>
</dbReference>
<dbReference type="GO" id="GO:0050852">
    <property type="term" value="P:T cell receptor signaling pathway"/>
    <property type="evidence" value="ECO:0000250"/>
    <property type="project" value="UniProtKB"/>
</dbReference>
<dbReference type="GO" id="GO:0006413">
    <property type="term" value="P:translational initiation"/>
    <property type="evidence" value="ECO:0000250"/>
    <property type="project" value="UniProtKB"/>
</dbReference>
<dbReference type="FunFam" id="1.20.120.1070:FF:000001">
    <property type="entry name" value="Eukaryotic translation initiation factor 2B subunit alpha"/>
    <property type="match status" value="1"/>
</dbReference>
<dbReference type="FunFam" id="3.40.50.10470:FF:000001">
    <property type="entry name" value="Translation initiation factor eIF-2B subunit alpha"/>
    <property type="match status" value="1"/>
</dbReference>
<dbReference type="Gene3D" id="3.40.50.10470">
    <property type="entry name" value="Translation initiation factor eif-2b, domain 2"/>
    <property type="match status" value="1"/>
</dbReference>
<dbReference type="Gene3D" id="1.20.120.1070">
    <property type="entry name" value="Translation initiation factor eIF-2B, N-terminal domain"/>
    <property type="match status" value="1"/>
</dbReference>
<dbReference type="InterPro" id="IPR051501">
    <property type="entry name" value="eIF2B_alpha/beta/delta"/>
</dbReference>
<dbReference type="InterPro" id="IPR042528">
    <property type="entry name" value="elF-2B_alpha_N"/>
</dbReference>
<dbReference type="InterPro" id="IPR000649">
    <property type="entry name" value="IF-2B-related"/>
</dbReference>
<dbReference type="InterPro" id="IPR042529">
    <property type="entry name" value="IF_2B-like_C"/>
</dbReference>
<dbReference type="InterPro" id="IPR037171">
    <property type="entry name" value="NagB/RpiA_transferase-like"/>
</dbReference>
<dbReference type="PANTHER" id="PTHR45860">
    <property type="entry name" value="TRANSLATION INITIATION FACTOR EIF-2B SUBUNIT ALPHA"/>
    <property type="match status" value="1"/>
</dbReference>
<dbReference type="PANTHER" id="PTHR45860:SF1">
    <property type="entry name" value="TRANSLATION INITIATION FACTOR EIF-2B SUBUNIT ALPHA"/>
    <property type="match status" value="1"/>
</dbReference>
<dbReference type="Pfam" id="PF01008">
    <property type="entry name" value="IF-2B"/>
    <property type="match status" value="1"/>
</dbReference>
<dbReference type="SUPFAM" id="SSF100950">
    <property type="entry name" value="NagB/RpiA/CoA transferase-like"/>
    <property type="match status" value="1"/>
</dbReference>
<keyword id="KW-0007">Acetylation</keyword>
<keyword id="KW-0963">Cytoplasm</keyword>
<keyword id="KW-0396">Initiation factor</keyword>
<keyword id="KW-0648">Protein biosynthesis</keyword>
<keyword id="KW-1185">Reference proteome</keyword>
<reference key="1">
    <citation type="journal article" date="2004" name="Genome Res.">
        <title>The status, quality, and expansion of the NIH full-length cDNA project: the Mammalian Gene Collection (MGC).</title>
        <authorList>
            <consortium name="The MGC Project Team"/>
        </authorList>
    </citation>
    <scope>NUCLEOTIDE SEQUENCE [LARGE SCALE MRNA]</scope>
</reference>
<reference key="2">
    <citation type="journal article" date="2010" name="Cell">
        <title>A tissue-specific atlas of mouse protein phosphorylation and expression.</title>
        <authorList>
            <person name="Huttlin E.L."/>
            <person name="Jedrychowski M.P."/>
            <person name="Elias J.E."/>
            <person name="Goswami T."/>
            <person name="Rad R."/>
            <person name="Beausoleil S.A."/>
            <person name="Villen J."/>
            <person name="Haas W."/>
            <person name="Sowa M.E."/>
            <person name="Gygi S.P."/>
        </authorList>
    </citation>
    <scope>IDENTIFICATION BY MASS SPECTROMETRY [LARGE SCALE ANALYSIS]</scope>
    <source>
        <tissue>Brain</tissue>
        <tissue>Heart</tissue>
        <tissue>Kidney</tissue>
        <tissue>Liver</tissue>
        <tissue>Lung</tissue>
        <tissue>Pancreas</tissue>
        <tissue>Spleen</tissue>
        <tissue>Testis</tissue>
    </source>
</reference>
<sequence length="305" mass="33816">MEDGELIEYFKSQMKGDPKMASAVAAIQTLLEFLKRDKGETLQGLRANLTYAIKTLCGVDSSVAVSSGGELFLRFISLTSLEYSDYSKCKKIMIERGELFLRRISLSRNKIANLCHTFIKDGARILTHAYSRVVLRVLEEAVAAKKRFSVYITESQPDLSGKKMAKALSHLNVPVTVVLDAAVGYIMEKADLVIVGAEGVVENGGIINKIGTNQMAVCAKAQNKPFYVVAESFKFVRLFPLNQEDVPDKFKYKADTLKSVQTGQDLKEEHPWVDYTSPSLITLLFTDLGVLTPSAVSDELIKLYL</sequence>
<evidence type="ECO:0000250" key="1">
    <source>
        <dbReference type="UniProtKB" id="Q14232"/>
    </source>
</evidence>
<evidence type="ECO:0000250" key="2">
    <source>
        <dbReference type="UniProtKB" id="Q9USP0"/>
    </source>
</evidence>
<evidence type="ECO:0000305" key="3"/>
<accession>Q99LC8</accession>
<comment type="function">
    <text evidence="1">Acts as a component of the translation initiation factor 2B (eIF2B) complex, which catalyzes the exchange of GDP for GTP on eukaryotic initiation factor 2 (eIF2) gamma subunit. Its guanine nucleotide exchange factor activity is repressed when bound to eIF2 complex phosphorylated on the alpha subunit, thereby limiting the amount of methionyl-initiator methionine tRNA available to the ribosome and consequently global translation is repressed.</text>
</comment>
<comment type="activity regulation">
    <text evidence="1">Activated by the chemical integrated stress response (ISR) inhibitor ISRIB which stimulates guanine nucleotide exchange factor activity for both phosphorylated and unphosphorylated eIF2.</text>
</comment>
<comment type="subunit">
    <text evidence="1">Component of the translation initiation factor 2B (eIF2B) complex which is a heterodecamer of two sets of five different subunits: alpha, beta, gamma, delta and epsilon. Subunits alpha, beta and delta comprise a regulatory subcomplex and subunits epsilon and gamma comprise a catalytic subcomplex. Within the complex, the hexameric regulatory complex resides at the center, with the two heterodimeric catalytic subcomplexes bound on opposite sides.</text>
</comment>
<comment type="subcellular location">
    <subcellularLocation>
        <location evidence="2">Cytoplasm</location>
        <location evidence="2">Cytosol</location>
    </subcellularLocation>
</comment>
<comment type="similarity">
    <text evidence="3">Belongs to the eIF-2B alpha/beta/delta subunits family.</text>
</comment>
<feature type="chain" id="PRO_0000156056" description="Translation initiation factor eIF2B subunit alpha">
    <location>
        <begin position="1"/>
        <end position="305"/>
    </location>
</feature>
<feature type="modified residue" description="N6-acetyllysine" evidence="1">
    <location>
        <position position="35"/>
    </location>
</feature>
<name>EI2BA_MOUSE</name>
<gene>
    <name type="primary">Eif2b1</name>
</gene>
<organism>
    <name type="scientific">Mus musculus</name>
    <name type="common">Mouse</name>
    <dbReference type="NCBI Taxonomy" id="10090"/>
    <lineage>
        <taxon>Eukaryota</taxon>
        <taxon>Metazoa</taxon>
        <taxon>Chordata</taxon>
        <taxon>Craniata</taxon>
        <taxon>Vertebrata</taxon>
        <taxon>Euteleostomi</taxon>
        <taxon>Mammalia</taxon>
        <taxon>Eutheria</taxon>
        <taxon>Euarchontoglires</taxon>
        <taxon>Glires</taxon>
        <taxon>Rodentia</taxon>
        <taxon>Myomorpha</taxon>
        <taxon>Muroidea</taxon>
        <taxon>Muridae</taxon>
        <taxon>Murinae</taxon>
        <taxon>Mus</taxon>
        <taxon>Mus</taxon>
    </lineage>
</organism>
<proteinExistence type="evidence at protein level"/>
<protein>
    <recommendedName>
        <fullName>Translation initiation factor eIF2B subunit alpha</fullName>
    </recommendedName>
    <alternativeName>
        <fullName>eIF2B GDP-GTP exchange factor subunit alpha</fullName>
    </alternativeName>
</protein>